<feature type="chain" id="PRO_0000048885" description="Homeobox protein goosecoid">
    <location>
        <begin position="1"/>
        <end position="257"/>
    </location>
</feature>
<feature type="DNA-binding region" description="Homeobox" evidence="2">
    <location>
        <begin position="160"/>
        <end position="219"/>
    </location>
</feature>
<feature type="region of interest" description="Disordered" evidence="3">
    <location>
        <begin position="213"/>
        <end position="257"/>
    </location>
</feature>
<feature type="compositionally biased region" description="Basic and acidic residues" evidence="3">
    <location>
        <begin position="241"/>
        <end position="257"/>
    </location>
</feature>
<feature type="sequence conflict" description="In Ref. 1." evidence="5" ref="1">
    <original>AHS</original>
    <variation>RT</variation>
    <location>
        <begin position="26"/>
        <end position="28"/>
    </location>
</feature>
<feature type="sequence conflict" description="In Ref. 1." evidence="5" ref="1">
    <location>
        <begin position="45"/>
        <end position="47"/>
    </location>
</feature>
<feature type="sequence conflict" description="In Ref. 1." evidence="5" ref="1">
    <location>
        <position position="65"/>
    </location>
</feature>
<feature type="sequence conflict" description="In Ref. 1." evidence="5" ref="1">
    <original>S</original>
    <variation>T</variation>
    <location>
        <position position="74"/>
    </location>
</feature>
<feature type="helix" evidence="6">
    <location>
        <begin position="169"/>
        <end position="181"/>
    </location>
</feature>
<feature type="helix" evidence="6">
    <location>
        <begin position="187"/>
        <end position="196"/>
    </location>
</feature>
<feature type="helix" evidence="6">
    <location>
        <begin position="201"/>
        <end position="217"/>
    </location>
</feature>
<comment type="function">
    <text evidence="1 4">Regulates chordin (CHRD). May play a role in spatial programing within discrete embryonic fields or lineage compartments during organogenesis. In concert with NKX3-2, plays a role in defining the structural components of the middle ear; required for the development of the entire tympanic ring (By similarity). Probably involved in the regulatory networks that define neural crest cell fate specification and determine mesoderm cell lineages in mammals.</text>
</comment>
<comment type="subcellular location">
    <subcellularLocation>
        <location>Nucleus</location>
    </subcellularLocation>
</comment>
<comment type="disease" evidence="4">
    <disease id="DI-04071">
        <name>Short stature, auditory canal atresia, mandibular hypoplasia, skeletal abnormalities</name>
        <acronym>SAMS</acronym>
        <description>An autosomal recessive developmental disorder with features of a first and second branchial arch syndrome, and with unique rhizomelic skeletal anomalies. Craniofacial abnormalities can lead to conductive hearing loss, respiratory insufficiency, and feeding difficulties. Skeletal features include bilateral humeral hypoplasia, humeroscapular synostosis, pelvic abnormalities, and proximal defects of the femora. Affected individuals may also have some features of a neurocristopathy or abnormal mesoderm development, such as urogenital anomalies, that are distinct from other branchial arch syndromes.</description>
        <dbReference type="MIM" id="602471"/>
    </disease>
    <text>The disease is caused by variants affecting the gene represented in this entry.</text>
</comment>
<comment type="similarity">
    <text evidence="5">Belongs to the paired homeobox family. Bicoid subfamily.</text>
</comment>
<sequence>MPASMFSIDNILAARPRCKDSVLPVAHSAAAPVVFPALHGDSLYGASGGASSDYGAFYPRPVAPGGAGLPAAVSGSRLGYNNYFYGQLHVQAAPVGPACCGAVPPLGAQQCSCVPTPPGYEGPGSVLVSPVPHQMLPYMNVGTLSRTELQLLNQLHCRRKRRHRTIFTDEQLEALENLFQETKYPDVGTREQLARKVHLREEKVEVWFKNRRAKWRRQKRSSSEESENAEKWNKTSSSKASPEKREEEGKSDLDSDS</sequence>
<reference key="1">
    <citation type="journal article" date="1994" name="Genomics">
        <title>Molecular cloning of the human homeobox gene goosecoid (GSC) and mapping of the gene to human chromosome 14q32.1.</title>
        <authorList>
            <person name="Blum M."/>
            <person name="De Robertis E.M."/>
            <person name="Kojis T."/>
            <person name="Heinzmann C."/>
            <person name="Klisak I."/>
            <person name="Geissert D."/>
            <person name="Sparkes R.S."/>
        </authorList>
    </citation>
    <scope>NUCLEOTIDE SEQUENCE [MRNA]</scope>
    <source>
        <tissue>Leukocyte</tissue>
    </source>
</reference>
<reference key="2">
    <citation type="submission" date="2002-11" db="EMBL/GenBank/DDBJ databases">
        <title>Cloning and expression pattern, DNA binding study of two novel human Hox genes.</title>
        <authorList>
            <person name="Guo J.H."/>
            <person name="Chen S."/>
            <person name="Chen L."/>
            <person name="Yu L."/>
        </authorList>
    </citation>
    <scope>NUCLEOTIDE SEQUENCE [LARGE SCALE MRNA]</scope>
    <source>
        <tissue>Testis</tissue>
    </source>
</reference>
<reference key="3">
    <citation type="journal article" date="2004" name="Genome Res.">
        <title>The status, quality, and expansion of the NIH full-length cDNA project: the Mammalian Gene Collection (MGC).</title>
        <authorList>
            <consortium name="The MGC Project Team"/>
        </authorList>
    </citation>
    <scope>NUCLEOTIDE SEQUENCE [LARGE SCALE MRNA]</scope>
    <source>
        <tissue>Bone</tissue>
    </source>
</reference>
<reference key="4">
    <citation type="journal article" date="2013" name="Am. J. Hum. Genet.">
        <title>SAMS, a syndrome of short stature, auditory-canal atresia, mandibular hypoplasia, and skeletal abnormalities is a unique neurocristopathy caused by mutations in Goosecoid.</title>
        <authorList>
            <person name="Parry D.A."/>
            <person name="Logan C.V."/>
            <person name="Stegmann A.P."/>
            <person name="Abdelhamed Z.A."/>
            <person name="Calder A."/>
            <person name="Khan S."/>
            <person name="Bonthron D.T."/>
            <person name="Clowes V."/>
            <person name="Sheridan E."/>
            <person name="Ghali N."/>
            <person name="Chudley A.E."/>
            <person name="Dobbie A."/>
            <person name="Stumpel C.T."/>
            <person name="Johnson C.A."/>
        </authorList>
    </citation>
    <scope>FUNCTION</scope>
    <scope>INVOLVEMENT IN SAMS</scope>
</reference>
<reference key="5">
    <citation type="submission" date="2006-10" db="PDB data bank">
        <title>Solution structure of the homeobox domain of homeobox protein goosecoid.</title>
        <authorList>
            <consortium name="RIKEN structural genomics initiative (RSGI)"/>
        </authorList>
    </citation>
    <scope>STRUCTURE BY NMR OF 161-217</scope>
</reference>
<keyword id="KW-0002">3D-structure</keyword>
<keyword id="KW-0217">Developmental protein</keyword>
<keyword id="KW-0238">DNA-binding</keyword>
<keyword id="KW-0242">Dwarfism</keyword>
<keyword id="KW-0371">Homeobox</keyword>
<keyword id="KW-0539">Nucleus</keyword>
<keyword id="KW-1267">Proteomics identification</keyword>
<keyword id="KW-1185">Reference proteome</keyword>
<accession>P56915</accession>
<accession>Q86YR1</accession>
<proteinExistence type="evidence at protein level"/>
<protein>
    <recommendedName>
        <fullName>Homeobox protein goosecoid</fullName>
    </recommendedName>
</protein>
<dbReference type="EMBL" id="AY177407">
    <property type="protein sequence ID" value="AAO18645.1"/>
    <property type="molecule type" value="mRNA"/>
</dbReference>
<dbReference type="EMBL" id="BC063580">
    <property type="protein sequence ID" value="AAH63580.1"/>
    <property type="molecule type" value="mRNA"/>
</dbReference>
<dbReference type="CCDS" id="CCDS9930.1"/>
<dbReference type="PIR" id="A54677">
    <property type="entry name" value="A54677"/>
</dbReference>
<dbReference type="RefSeq" id="NP_776248.1">
    <property type="nucleotide sequence ID" value="NM_173849.3"/>
</dbReference>
<dbReference type="PDB" id="2DMU">
    <property type="method" value="NMR"/>
    <property type="chains" value="A=161-217"/>
</dbReference>
<dbReference type="PDBsum" id="2DMU"/>
<dbReference type="SMR" id="P56915"/>
<dbReference type="BioGRID" id="126899">
    <property type="interactions" value="80"/>
</dbReference>
<dbReference type="ELM" id="P56915"/>
<dbReference type="FunCoup" id="P56915">
    <property type="interactions" value="845"/>
</dbReference>
<dbReference type="IntAct" id="P56915">
    <property type="interactions" value="4"/>
</dbReference>
<dbReference type="STRING" id="9606.ENSP00000238558"/>
<dbReference type="GlyGen" id="P56915">
    <property type="glycosylation" value="1 site"/>
</dbReference>
<dbReference type="iPTMnet" id="P56915"/>
<dbReference type="PhosphoSitePlus" id="P56915"/>
<dbReference type="BioMuta" id="GSC"/>
<dbReference type="DMDM" id="61252078"/>
<dbReference type="MassIVE" id="P56915"/>
<dbReference type="PaxDb" id="9606-ENSP00000238558"/>
<dbReference type="PeptideAtlas" id="P56915"/>
<dbReference type="ProteomicsDB" id="56956"/>
<dbReference type="Antibodypedia" id="27137">
    <property type="antibodies" value="518 antibodies from 32 providers"/>
</dbReference>
<dbReference type="CPTC" id="P56915">
    <property type="antibodies" value="4 antibodies"/>
</dbReference>
<dbReference type="DNASU" id="145258"/>
<dbReference type="Ensembl" id="ENST00000238558.5">
    <property type="protein sequence ID" value="ENSP00000238558.3"/>
    <property type="gene ID" value="ENSG00000133937.5"/>
</dbReference>
<dbReference type="GeneID" id="145258"/>
<dbReference type="KEGG" id="hsa:145258"/>
<dbReference type="MANE-Select" id="ENST00000238558.5">
    <property type="protein sequence ID" value="ENSP00000238558.3"/>
    <property type="RefSeq nucleotide sequence ID" value="NM_173849.3"/>
    <property type="RefSeq protein sequence ID" value="NP_776248.1"/>
</dbReference>
<dbReference type="UCSC" id="uc001ydu.4">
    <property type="organism name" value="human"/>
</dbReference>
<dbReference type="AGR" id="HGNC:4612"/>
<dbReference type="CTD" id="145258"/>
<dbReference type="DisGeNET" id="145258"/>
<dbReference type="GeneCards" id="GSC"/>
<dbReference type="HGNC" id="HGNC:4612">
    <property type="gene designation" value="GSC"/>
</dbReference>
<dbReference type="HPA" id="ENSG00000133937">
    <property type="expression patterns" value="Tissue enhanced (adipose tissue, breast)"/>
</dbReference>
<dbReference type="MalaCards" id="GSC"/>
<dbReference type="MIM" id="138890">
    <property type="type" value="gene"/>
</dbReference>
<dbReference type="MIM" id="602471">
    <property type="type" value="phenotype"/>
</dbReference>
<dbReference type="neXtProt" id="NX_P56915"/>
<dbReference type="OpenTargets" id="ENSG00000133937"/>
<dbReference type="Orphanet" id="397623">
    <property type="disease" value="Short stature-auditory canal atresia-mandibular hypoplasia-skeletal anomalies syndrome"/>
</dbReference>
<dbReference type="PharmGKB" id="PA29004"/>
<dbReference type="VEuPathDB" id="HostDB:ENSG00000133937"/>
<dbReference type="eggNOG" id="KOG0490">
    <property type="taxonomic scope" value="Eukaryota"/>
</dbReference>
<dbReference type="GeneTree" id="ENSGT00940000160635"/>
<dbReference type="HOGENOM" id="CLU_096519_0_0_1"/>
<dbReference type="InParanoid" id="P56915"/>
<dbReference type="OMA" id="QCSCVPA"/>
<dbReference type="OrthoDB" id="6159439at2759"/>
<dbReference type="PAN-GO" id="P56915">
    <property type="GO annotations" value="4 GO annotations based on evolutionary models"/>
</dbReference>
<dbReference type="PhylomeDB" id="P56915"/>
<dbReference type="TreeFam" id="TF351613"/>
<dbReference type="PathwayCommons" id="P56915"/>
<dbReference type="Reactome" id="R-HSA-9754189">
    <property type="pathway name" value="Germ layer formation at gastrulation"/>
</dbReference>
<dbReference type="Reactome" id="R-HSA-9823730">
    <property type="pathway name" value="Formation of definitive endoderm"/>
</dbReference>
<dbReference type="SignaLink" id="P56915"/>
<dbReference type="SIGNOR" id="P56915"/>
<dbReference type="BioGRID-ORCS" id="145258">
    <property type="hits" value="10 hits in 1177 CRISPR screens"/>
</dbReference>
<dbReference type="EvolutionaryTrace" id="P56915"/>
<dbReference type="GeneWiki" id="GSC_(gene)"/>
<dbReference type="GenomeRNAi" id="145258"/>
<dbReference type="Pharos" id="P56915">
    <property type="development level" value="Tbio"/>
</dbReference>
<dbReference type="PRO" id="PR:P56915"/>
<dbReference type="Proteomes" id="UP000005640">
    <property type="component" value="Chromosome 14"/>
</dbReference>
<dbReference type="RNAct" id="P56915">
    <property type="molecule type" value="protein"/>
</dbReference>
<dbReference type="Bgee" id="ENSG00000133937">
    <property type="expression patterns" value="Expressed in male germ line stem cell (sensu Vertebrata) in testis and 61 other cell types or tissues"/>
</dbReference>
<dbReference type="GO" id="GO:0000785">
    <property type="term" value="C:chromatin"/>
    <property type="evidence" value="ECO:0000247"/>
    <property type="project" value="NTNU_SB"/>
</dbReference>
<dbReference type="GO" id="GO:0005634">
    <property type="term" value="C:nucleus"/>
    <property type="evidence" value="ECO:0000318"/>
    <property type="project" value="GO_Central"/>
</dbReference>
<dbReference type="GO" id="GO:0005667">
    <property type="term" value="C:transcription regulator complex"/>
    <property type="evidence" value="ECO:0007669"/>
    <property type="project" value="Ensembl"/>
</dbReference>
<dbReference type="GO" id="GO:0000981">
    <property type="term" value="F:DNA-binding transcription factor activity, RNA polymerase II-specific"/>
    <property type="evidence" value="ECO:0000247"/>
    <property type="project" value="NTNU_SB"/>
</dbReference>
<dbReference type="GO" id="GO:0001227">
    <property type="term" value="F:DNA-binding transcription repressor activity, RNA polymerase II-specific"/>
    <property type="evidence" value="ECO:0007669"/>
    <property type="project" value="Ensembl"/>
</dbReference>
<dbReference type="GO" id="GO:0000978">
    <property type="term" value="F:RNA polymerase II cis-regulatory region sequence-specific DNA binding"/>
    <property type="evidence" value="ECO:0000318"/>
    <property type="project" value="GO_Central"/>
</dbReference>
<dbReference type="GO" id="GO:0061629">
    <property type="term" value="F:RNA polymerase II-specific DNA-binding transcription factor binding"/>
    <property type="evidence" value="ECO:0000250"/>
    <property type="project" value="BHF-UCL"/>
</dbReference>
<dbReference type="GO" id="GO:1990837">
    <property type="term" value="F:sequence-specific double-stranded DNA binding"/>
    <property type="evidence" value="ECO:0000314"/>
    <property type="project" value="ARUK-UCL"/>
</dbReference>
<dbReference type="GO" id="GO:0021904">
    <property type="term" value="P:dorsal/ventral neural tube patterning"/>
    <property type="evidence" value="ECO:0007669"/>
    <property type="project" value="Ensembl"/>
</dbReference>
<dbReference type="GO" id="GO:0048704">
    <property type="term" value="P:embryonic skeletal system morphogenesis"/>
    <property type="evidence" value="ECO:0007669"/>
    <property type="project" value="Ensembl"/>
</dbReference>
<dbReference type="GO" id="GO:0030900">
    <property type="term" value="P:forebrain development"/>
    <property type="evidence" value="ECO:0007669"/>
    <property type="project" value="Ensembl"/>
</dbReference>
<dbReference type="GO" id="GO:0007369">
    <property type="term" value="P:gastrulation"/>
    <property type="evidence" value="ECO:0000303"/>
    <property type="project" value="UniProtKB"/>
</dbReference>
<dbReference type="GO" id="GO:0042474">
    <property type="term" value="P:middle ear morphogenesis"/>
    <property type="evidence" value="ECO:0000250"/>
    <property type="project" value="UniProtKB"/>
</dbReference>
<dbReference type="GO" id="GO:0048644">
    <property type="term" value="P:muscle organ morphogenesis"/>
    <property type="evidence" value="ECO:0007669"/>
    <property type="project" value="Ensembl"/>
</dbReference>
<dbReference type="GO" id="GO:0030178">
    <property type="term" value="P:negative regulation of Wnt signaling pathway"/>
    <property type="evidence" value="ECO:0007669"/>
    <property type="project" value="Ensembl"/>
</dbReference>
<dbReference type="GO" id="GO:0014036">
    <property type="term" value="P:neural crest cell fate specification"/>
    <property type="evidence" value="ECO:0000315"/>
    <property type="project" value="UniProtKB"/>
</dbReference>
<dbReference type="GO" id="GO:0006357">
    <property type="term" value="P:regulation of transcription by RNA polymerase II"/>
    <property type="evidence" value="ECO:0000318"/>
    <property type="project" value="GO_Central"/>
</dbReference>
<dbReference type="GO" id="GO:0023019">
    <property type="term" value="P:signal transduction involved in regulation of gene expression"/>
    <property type="evidence" value="ECO:0007669"/>
    <property type="project" value="Ensembl"/>
</dbReference>
<dbReference type="GO" id="GO:0016055">
    <property type="term" value="P:Wnt signaling pathway"/>
    <property type="evidence" value="ECO:0007669"/>
    <property type="project" value="Ensembl"/>
</dbReference>
<dbReference type="CDD" id="cd00086">
    <property type="entry name" value="homeodomain"/>
    <property type="match status" value="1"/>
</dbReference>
<dbReference type="FunFam" id="1.10.10.60:FF:000210">
    <property type="entry name" value="homeobox protein goosecoid"/>
    <property type="match status" value="1"/>
</dbReference>
<dbReference type="Gene3D" id="1.10.10.60">
    <property type="entry name" value="Homeodomain-like"/>
    <property type="match status" value="1"/>
</dbReference>
<dbReference type="IDEAL" id="IID00202"/>
<dbReference type="InterPro" id="IPR051440">
    <property type="entry name" value="Goosecoid-like_HB"/>
</dbReference>
<dbReference type="InterPro" id="IPR001356">
    <property type="entry name" value="HD"/>
</dbReference>
<dbReference type="InterPro" id="IPR017970">
    <property type="entry name" value="Homeobox_CS"/>
</dbReference>
<dbReference type="InterPro" id="IPR009057">
    <property type="entry name" value="Homeodomain-like_sf"/>
</dbReference>
<dbReference type="PANTHER" id="PTHR46643:SF2">
    <property type="entry name" value="HOMEOBOX PROTEIN GOOSECOID"/>
    <property type="match status" value="1"/>
</dbReference>
<dbReference type="PANTHER" id="PTHR46643">
    <property type="entry name" value="HOMEOBOX PROTEIN GOOSECOID-RELATED"/>
    <property type="match status" value="1"/>
</dbReference>
<dbReference type="Pfam" id="PF00046">
    <property type="entry name" value="Homeodomain"/>
    <property type="match status" value="1"/>
</dbReference>
<dbReference type="SMART" id="SM00389">
    <property type="entry name" value="HOX"/>
    <property type="match status" value="1"/>
</dbReference>
<dbReference type="SUPFAM" id="SSF46689">
    <property type="entry name" value="Homeodomain-like"/>
    <property type="match status" value="1"/>
</dbReference>
<dbReference type="PROSITE" id="PS00027">
    <property type="entry name" value="HOMEOBOX_1"/>
    <property type="match status" value="1"/>
</dbReference>
<dbReference type="PROSITE" id="PS50071">
    <property type="entry name" value="HOMEOBOX_2"/>
    <property type="match status" value="1"/>
</dbReference>
<evidence type="ECO:0000250" key="1"/>
<evidence type="ECO:0000255" key="2">
    <source>
        <dbReference type="PROSITE-ProRule" id="PRU00108"/>
    </source>
</evidence>
<evidence type="ECO:0000256" key="3">
    <source>
        <dbReference type="SAM" id="MobiDB-lite"/>
    </source>
</evidence>
<evidence type="ECO:0000269" key="4">
    <source>
    </source>
</evidence>
<evidence type="ECO:0000305" key="5"/>
<evidence type="ECO:0007829" key="6">
    <source>
        <dbReference type="PDB" id="2DMU"/>
    </source>
</evidence>
<gene>
    <name type="primary">GSC</name>
</gene>
<name>GSC_HUMAN</name>
<organism>
    <name type="scientific">Homo sapiens</name>
    <name type="common">Human</name>
    <dbReference type="NCBI Taxonomy" id="9606"/>
    <lineage>
        <taxon>Eukaryota</taxon>
        <taxon>Metazoa</taxon>
        <taxon>Chordata</taxon>
        <taxon>Craniata</taxon>
        <taxon>Vertebrata</taxon>
        <taxon>Euteleostomi</taxon>
        <taxon>Mammalia</taxon>
        <taxon>Eutheria</taxon>
        <taxon>Euarchontoglires</taxon>
        <taxon>Primates</taxon>
        <taxon>Haplorrhini</taxon>
        <taxon>Catarrhini</taxon>
        <taxon>Hominidae</taxon>
        <taxon>Homo</taxon>
    </lineage>
</organism>